<evidence type="ECO:0000255" key="1">
    <source>
        <dbReference type="HAMAP-Rule" id="MF_01316"/>
    </source>
</evidence>
<organism>
    <name type="scientific">Piper cenocladum</name>
    <name type="common">Ant piper</name>
    <dbReference type="NCBI Taxonomy" id="398741"/>
    <lineage>
        <taxon>Eukaryota</taxon>
        <taxon>Viridiplantae</taxon>
        <taxon>Streptophyta</taxon>
        <taxon>Embryophyta</taxon>
        <taxon>Tracheophyta</taxon>
        <taxon>Spermatophyta</taxon>
        <taxon>Magnoliopsida</taxon>
        <taxon>Magnoliidae</taxon>
        <taxon>Piperales</taxon>
        <taxon>Piperaceae</taxon>
        <taxon>Piper</taxon>
    </lineage>
</organism>
<dbReference type="EMBL" id="DQ887677">
    <property type="protein sequence ID" value="ABI14456.1"/>
    <property type="molecule type" value="Genomic_DNA"/>
</dbReference>
<dbReference type="RefSeq" id="YP_784457.1">
    <property type="nucleotide sequence ID" value="NC_008457.1"/>
</dbReference>
<dbReference type="SMR" id="Q06GS6"/>
<dbReference type="GeneID" id="4363766"/>
<dbReference type="GO" id="GO:0009535">
    <property type="term" value="C:chloroplast thylakoid membrane"/>
    <property type="evidence" value="ECO:0007669"/>
    <property type="project" value="UniProtKB-SubCell"/>
</dbReference>
<dbReference type="GO" id="GO:0009539">
    <property type="term" value="C:photosystem II reaction center"/>
    <property type="evidence" value="ECO:0007669"/>
    <property type="project" value="InterPro"/>
</dbReference>
<dbReference type="GO" id="GO:0015979">
    <property type="term" value="P:photosynthesis"/>
    <property type="evidence" value="ECO:0007669"/>
    <property type="project" value="UniProtKB-UniRule"/>
</dbReference>
<dbReference type="HAMAP" id="MF_01316">
    <property type="entry name" value="PSII_PsbI"/>
    <property type="match status" value="1"/>
</dbReference>
<dbReference type="InterPro" id="IPR003686">
    <property type="entry name" value="PSII_PsbI"/>
</dbReference>
<dbReference type="InterPro" id="IPR037271">
    <property type="entry name" value="PSII_PsbI_sf"/>
</dbReference>
<dbReference type="NCBIfam" id="NF002735">
    <property type="entry name" value="PRK02655.1"/>
    <property type="match status" value="1"/>
</dbReference>
<dbReference type="PANTHER" id="PTHR35772">
    <property type="entry name" value="PHOTOSYSTEM II REACTION CENTER PROTEIN I"/>
    <property type="match status" value="1"/>
</dbReference>
<dbReference type="PANTHER" id="PTHR35772:SF1">
    <property type="entry name" value="PHOTOSYSTEM II REACTION CENTER PROTEIN I"/>
    <property type="match status" value="1"/>
</dbReference>
<dbReference type="Pfam" id="PF02532">
    <property type="entry name" value="PsbI"/>
    <property type="match status" value="1"/>
</dbReference>
<dbReference type="SUPFAM" id="SSF161041">
    <property type="entry name" value="Photosystem II reaction center protein I, PsbI"/>
    <property type="match status" value="1"/>
</dbReference>
<protein>
    <recommendedName>
        <fullName evidence="1">Photosystem II reaction center protein I</fullName>
        <shortName evidence="1">PSII-I</shortName>
    </recommendedName>
    <alternativeName>
        <fullName evidence="1">PSII 4.8 kDa protein</fullName>
    </alternativeName>
</protein>
<reference key="1">
    <citation type="journal article" date="2006" name="BMC Evol. Biol.">
        <title>Complete plastid genome sequences of Drimys, Liriodendron, and Piper: implications for the phylogenetic relationships of magnoliids.</title>
        <authorList>
            <person name="Cai Z."/>
            <person name="Penaflor C."/>
            <person name="Kuehl J.V."/>
            <person name="Leebens-Mack J."/>
            <person name="Carlson J.E."/>
            <person name="dePamphilis C.W."/>
            <person name="Boore J.L."/>
            <person name="Jansen R.K."/>
        </authorList>
    </citation>
    <scope>NUCLEOTIDE SEQUENCE [LARGE SCALE GENOMIC DNA]</scope>
</reference>
<comment type="function">
    <text evidence="1">One of the components of the core complex of photosystem II (PSII), required for its stability and/or assembly. PSII is a light-driven water:plastoquinone oxidoreductase that uses light energy to abstract electrons from H(2)O, generating O(2) and a proton gradient subsequently used for ATP formation. It consists of a core antenna complex that captures photons, and an electron transfer chain that converts photonic excitation into a charge separation.</text>
</comment>
<comment type="subunit">
    <text evidence="1">PSII is composed of 1 copy each of membrane proteins PsbA, PsbB, PsbC, PsbD, PsbE, PsbF, PsbH, PsbI, PsbJ, PsbK, PsbL, PsbM, PsbT, PsbX, PsbY, PsbZ, Psb30/Ycf12, at least 3 peripheral proteins of the oxygen-evolving complex and a large number of cofactors. It forms dimeric complexes.</text>
</comment>
<comment type="subcellular location">
    <subcellularLocation>
        <location evidence="1">Plastid</location>
        <location evidence="1">Chloroplast thylakoid membrane</location>
        <topology evidence="1">Single-pass membrane protein</topology>
    </subcellularLocation>
</comment>
<comment type="similarity">
    <text evidence="1">Belongs to the PsbI family.</text>
</comment>
<name>PSBI_PIPCE</name>
<accession>Q06GS6</accession>
<feature type="chain" id="PRO_0000275805" description="Photosystem II reaction center protein I">
    <location>
        <begin position="1"/>
        <end position="36"/>
    </location>
</feature>
<feature type="transmembrane region" description="Helical" evidence="1">
    <location>
        <begin position="4"/>
        <end position="24"/>
    </location>
</feature>
<keyword id="KW-0150">Chloroplast</keyword>
<keyword id="KW-0472">Membrane</keyword>
<keyword id="KW-0602">Photosynthesis</keyword>
<keyword id="KW-0604">Photosystem II</keyword>
<keyword id="KW-0934">Plastid</keyword>
<keyword id="KW-0674">Reaction center</keyword>
<keyword id="KW-0793">Thylakoid</keyword>
<keyword id="KW-0812">Transmembrane</keyword>
<keyword id="KW-1133">Transmembrane helix</keyword>
<gene>
    <name evidence="1" type="primary">psbI</name>
</gene>
<proteinExistence type="inferred from homology"/>
<sequence length="36" mass="4154">MLTLKLFVYTVVIFFVSLFIFGFLSNDPGRNPGRED</sequence>
<geneLocation type="chloroplast"/>